<feature type="signal peptide" evidence="1">
    <location>
        <begin position="1"/>
        <end position="18"/>
    </location>
</feature>
<feature type="chain" id="PRO_0000425331" description="Proapolipoprotein A-I">
    <location>
        <begin position="19"/>
        <end position="262"/>
    </location>
</feature>
<feature type="chain" id="PRO_0000425095" description="Apolipoprotein A-I">
    <location>
        <begin position="25"/>
        <end position="262"/>
    </location>
</feature>
<feature type="chain" id="PRO_0000425096" description="Truncated apolipoprotein A-I">
    <location>
        <begin position="25"/>
        <end position="261"/>
    </location>
</feature>
<feature type="repeat" description="1">
    <location>
        <begin position="67"/>
        <end position="88"/>
    </location>
</feature>
<feature type="repeat" description="2">
    <location>
        <begin position="89"/>
        <end position="110"/>
    </location>
</feature>
<feature type="repeat" description="3; half-length">
    <location>
        <begin position="111"/>
        <end position="121"/>
    </location>
</feature>
<feature type="repeat" description="4">
    <location>
        <begin position="122"/>
        <end position="142"/>
    </location>
</feature>
<feature type="repeat" description="5">
    <location>
        <begin position="144"/>
        <end position="165"/>
    </location>
</feature>
<feature type="repeat" description="6">
    <location>
        <begin position="166"/>
        <end position="184"/>
    </location>
</feature>
<feature type="repeat" description="7">
    <location>
        <begin position="185"/>
        <end position="206"/>
    </location>
</feature>
<feature type="repeat" description="8">
    <location>
        <begin position="207"/>
        <end position="227"/>
    </location>
</feature>
<feature type="repeat" description="9; half-length">
    <location>
        <begin position="228"/>
        <end position="238"/>
    </location>
</feature>
<feature type="repeat" description="10">
    <location>
        <begin position="239"/>
        <end position="262"/>
    </location>
</feature>
<feature type="region of interest" description="10 X approximate tandem repeats" evidence="1">
    <location>
        <begin position="67"/>
        <end position="262"/>
    </location>
</feature>
<feature type="modified residue" description="Methionine sulfoxide" evidence="1">
    <location>
        <position position="109"/>
    </location>
</feature>
<feature type="modified residue" description="Methionine sulfoxide" evidence="1">
    <location>
        <position position="238"/>
    </location>
</feature>
<dbReference type="EMBL" id="AGTT01159304">
    <property type="status" value="NOT_ANNOTATED_CDS"/>
    <property type="molecule type" value="Genomic_DNA"/>
</dbReference>
<dbReference type="RefSeq" id="XP_005980012.1">
    <property type="nucleotide sequence ID" value="XM_005979950.1"/>
</dbReference>
<dbReference type="SMR" id="P0DMA8"/>
<dbReference type="GO" id="GO:0042627">
    <property type="term" value="C:chylomicron"/>
    <property type="evidence" value="ECO:0007669"/>
    <property type="project" value="TreeGrafter"/>
</dbReference>
<dbReference type="GO" id="GO:1903561">
    <property type="term" value="C:extracellular vesicle"/>
    <property type="evidence" value="ECO:0007669"/>
    <property type="project" value="TreeGrafter"/>
</dbReference>
<dbReference type="GO" id="GO:0034364">
    <property type="term" value="C:high-density lipoprotein particle"/>
    <property type="evidence" value="ECO:0007669"/>
    <property type="project" value="UniProtKB-KW"/>
</dbReference>
<dbReference type="GO" id="GO:0034362">
    <property type="term" value="C:low-density lipoprotein particle"/>
    <property type="evidence" value="ECO:0007669"/>
    <property type="project" value="TreeGrafter"/>
</dbReference>
<dbReference type="GO" id="GO:0034361">
    <property type="term" value="C:very-low-density lipoprotein particle"/>
    <property type="evidence" value="ECO:0007669"/>
    <property type="project" value="TreeGrafter"/>
</dbReference>
<dbReference type="GO" id="GO:0120020">
    <property type="term" value="F:cholesterol transfer activity"/>
    <property type="evidence" value="ECO:0007669"/>
    <property type="project" value="TreeGrafter"/>
</dbReference>
<dbReference type="GO" id="GO:0060228">
    <property type="term" value="F:phosphatidylcholine-sterol O-acyltransferase activator activity"/>
    <property type="evidence" value="ECO:0007669"/>
    <property type="project" value="TreeGrafter"/>
</dbReference>
<dbReference type="GO" id="GO:0005543">
    <property type="term" value="F:phospholipid binding"/>
    <property type="evidence" value="ECO:0007669"/>
    <property type="project" value="TreeGrafter"/>
</dbReference>
<dbReference type="GO" id="GO:0042803">
    <property type="term" value="F:protein homodimerization activity"/>
    <property type="evidence" value="ECO:0000250"/>
    <property type="project" value="UniProtKB"/>
</dbReference>
<dbReference type="GO" id="GO:0055090">
    <property type="term" value="P:acylglycerol homeostasis"/>
    <property type="evidence" value="ECO:0007669"/>
    <property type="project" value="TreeGrafter"/>
</dbReference>
<dbReference type="GO" id="GO:0033344">
    <property type="term" value="P:cholesterol efflux"/>
    <property type="evidence" value="ECO:0007669"/>
    <property type="project" value="TreeGrafter"/>
</dbReference>
<dbReference type="GO" id="GO:0008203">
    <property type="term" value="P:cholesterol metabolic process"/>
    <property type="evidence" value="ECO:0007669"/>
    <property type="project" value="UniProtKB-KW"/>
</dbReference>
<dbReference type="GO" id="GO:0042157">
    <property type="term" value="P:lipoprotein metabolic process"/>
    <property type="evidence" value="ECO:0007669"/>
    <property type="project" value="InterPro"/>
</dbReference>
<dbReference type="GO" id="GO:0033700">
    <property type="term" value="P:phospholipid efflux"/>
    <property type="evidence" value="ECO:0007669"/>
    <property type="project" value="TreeGrafter"/>
</dbReference>
<dbReference type="GO" id="GO:0010875">
    <property type="term" value="P:positive regulation of cholesterol efflux"/>
    <property type="evidence" value="ECO:0000250"/>
    <property type="project" value="UniProtKB"/>
</dbReference>
<dbReference type="GO" id="GO:0050766">
    <property type="term" value="P:positive regulation of phagocytosis"/>
    <property type="evidence" value="ECO:0000250"/>
    <property type="project" value="UniProtKB"/>
</dbReference>
<dbReference type="GO" id="GO:1902995">
    <property type="term" value="P:positive regulation of phospholipid efflux"/>
    <property type="evidence" value="ECO:0000250"/>
    <property type="project" value="UniProtKB"/>
</dbReference>
<dbReference type="GO" id="GO:0050821">
    <property type="term" value="P:protein stabilization"/>
    <property type="evidence" value="ECO:0000250"/>
    <property type="project" value="UniProtKB"/>
</dbReference>
<dbReference type="FunFam" id="1.20.120.20:FF:000001">
    <property type="entry name" value="Apolipoprotein A-I"/>
    <property type="match status" value="1"/>
</dbReference>
<dbReference type="FunFam" id="1.20.5.20:FF:000001">
    <property type="entry name" value="apolipoprotein A-I"/>
    <property type="match status" value="1"/>
</dbReference>
<dbReference type="Gene3D" id="1.20.5.20">
    <property type="match status" value="1"/>
</dbReference>
<dbReference type="Gene3D" id="6.10.140.380">
    <property type="match status" value="1"/>
</dbReference>
<dbReference type="Gene3D" id="1.20.120.20">
    <property type="entry name" value="Apolipoprotein"/>
    <property type="match status" value="1"/>
</dbReference>
<dbReference type="InterPro" id="IPR000074">
    <property type="entry name" value="ApoA_E"/>
</dbReference>
<dbReference type="InterPro" id="IPR050163">
    <property type="entry name" value="Apolipoprotein_A1/A4/E"/>
</dbReference>
<dbReference type="PANTHER" id="PTHR18976">
    <property type="entry name" value="APOLIPOPROTEIN"/>
    <property type="match status" value="1"/>
</dbReference>
<dbReference type="PANTHER" id="PTHR18976:SF11">
    <property type="entry name" value="APOLIPOPROTEIN A-I"/>
    <property type="match status" value="1"/>
</dbReference>
<dbReference type="Pfam" id="PF01442">
    <property type="entry name" value="Apolipoprotein"/>
    <property type="match status" value="1"/>
</dbReference>
<dbReference type="SUPFAM" id="SSF58113">
    <property type="entry name" value="Apolipoprotein A-I"/>
    <property type="match status" value="1"/>
</dbReference>
<organism>
    <name type="scientific">Pantholops hodgsonii</name>
    <name type="common">Chiru</name>
    <name type="synonym">Tibetan antelope</name>
    <dbReference type="NCBI Taxonomy" id="59538"/>
    <lineage>
        <taxon>Eukaryota</taxon>
        <taxon>Metazoa</taxon>
        <taxon>Chordata</taxon>
        <taxon>Craniata</taxon>
        <taxon>Vertebrata</taxon>
        <taxon>Euteleostomi</taxon>
        <taxon>Mammalia</taxon>
        <taxon>Eutheria</taxon>
        <taxon>Laurasiatheria</taxon>
        <taxon>Artiodactyla</taxon>
        <taxon>Ruminantia</taxon>
        <taxon>Pecora</taxon>
        <taxon>Bovidae</taxon>
        <taxon>Antilopinae</taxon>
        <taxon>Pantholops</taxon>
    </lineage>
</organism>
<proteinExistence type="evidence at transcript level"/>
<comment type="function">
    <text evidence="1">Participates in the reverse transport of cholesterol from tissues to the liver for excretion by promoting cholesterol efflux from tissues and by acting as a cofactor for the lecithin cholesterol acyltransferase (LCAT). As part of the SPAP complex, activates spermatozoa motility (By similarity).</text>
</comment>
<comment type="subunit">
    <text evidence="2 3 4">Homodimer (By similarity). Interacts with APOA1BP and CLU. Component of a sperm activating protein complex (SPAP), consisting of APOA1, an immunoglobulin heavy chain, an immunoglobulin light chain and albumin. Interacts with NDRG1. Interacts with SCGB3A2 (By similarity). Interacts with NAXE and YJEFN3 (By similarity).</text>
</comment>
<comment type="subcellular location">
    <subcellularLocation>
        <location>Secreted</location>
    </subcellularLocation>
</comment>
<comment type="tissue specificity">
    <text>Major protein of plasma HDL, also found in chylomicrons.</text>
</comment>
<comment type="PTM">
    <text evidence="1">Glycosylated.</text>
</comment>
<comment type="PTM">
    <text evidence="1">Palmitoylated.</text>
</comment>
<comment type="PTM">
    <text evidence="1">Phosphorylation sites are present in the extracellular medium.</text>
</comment>
<comment type="similarity">
    <text evidence="5">Belongs to the apolipoprotein A1/A4/E family.</text>
</comment>
<gene>
    <name type="primary">APOA1</name>
</gene>
<name>APOA1_PANHO</name>
<evidence type="ECO:0000250" key="1"/>
<evidence type="ECO:0000250" key="2">
    <source>
        <dbReference type="UniProtKB" id="G5BQH5"/>
    </source>
</evidence>
<evidence type="ECO:0000250" key="3">
    <source>
        <dbReference type="UniProtKB" id="P02647"/>
    </source>
</evidence>
<evidence type="ECO:0000250" key="4">
    <source>
        <dbReference type="UniProtKB" id="P04639"/>
    </source>
</evidence>
<evidence type="ECO:0000305" key="5"/>
<sequence length="262" mass="29941">MKAVVLTLAVLFLTGSQARHFWQQDEPQSSWDRVKDFATVYVEAIKDSGRDYVAQFEASALGKQLNLKLLDNWDTLASTLSKVREQLGPVTQEFWDNLEKETAALRQEMNKDLEEVKQKVQPYLDEFQRKWHEEVEIYRQKVAPLGEEFREGARQKVQELQDRLSPLAQELRDRARAHVEKQLAPYSDDLRQRLTARLEALKEGGGSLAEYHAKATEQLKALGEKAKPALEDLRQGLMPVLESLKVSILAAIDEASKKLNAQ</sequence>
<reference key="1">
    <citation type="journal article" date="2013" name="Nat. Commun.">
        <title>Draft genome sequence of the Tibetan antelope.</title>
        <authorList>
            <person name="Ge R.L."/>
            <person name="Cai Q."/>
            <person name="Shen Y.Y."/>
            <person name="San A."/>
            <person name="Ma L."/>
            <person name="Zhang Y."/>
            <person name="Yi X."/>
            <person name="Chen Y."/>
            <person name="Yang L."/>
            <person name="Huang Y."/>
            <person name="He R."/>
            <person name="Hui Y."/>
            <person name="Hao M."/>
            <person name="Li Y."/>
            <person name="Wang B."/>
            <person name="Ou X."/>
            <person name="Xu J."/>
            <person name="Zhang Y."/>
            <person name="Wu K."/>
            <person name="Geng C."/>
            <person name="Zhou W."/>
            <person name="Zhou T."/>
            <person name="Irwin D.M."/>
            <person name="Yang Y."/>
            <person name="Ying L."/>
            <person name="Bao H."/>
            <person name="Kim J."/>
            <person name="Larkin D.M."/>
            <person name="Ma J."/>
            <person name="Lewin H.A."/>
            <person name="Xing J."/>
            <person name="Platt R.N. II"/>
            <person name="Ray D.A."/>
            <person name="Auvil L."/>
            <person name="Capitanu B."/>
            <person name="Zhang X."/>
            <person name="Zhang G."/>
            <person name="Murphy R.W."/>
            <person name="Wang J."/>
            <person name="Zhang Y.P."/>
            <person name="Wang J."/>
        </authorList>
    </citation>
    <scope>NUCLEOTIDE SEQUENCE [LARGE SCALE GENOMIC DNA]</scope>
</reference>
<reference key="2">
    <citation type="unpublished observations" date="2013-11">
        <authorList>
            <person name="Puppione D.L."/>
        </authorList>
    </citation>
    <scope>IDENTIFICATION</scope>
</reference>
<protein>
    <recommendedName>
        <fullName>Apolipoprotein A-I</fullName>
        <shortName>Apo-AI</shortName>
        <shortName>ApoA-I</shortName>
    </recommendedName>
    <alternativeName>
        <fullName>Apolipoprotein A1</fullName>
    </alternativeName>
    <component>
        <recommendedName>
            <fullName>Proapolipoprotein A-I</fullName>
            <shortName>ProapoA-I</shortName>
        </recommendedName>
    </component>
    <component>
        <recommendedName>
            <fullName>Truncated apolipoprotein A-I</fullName>
        </recommendedName>
    </component>
</protein>
<keyword id="KW-0153">Cholesterol metabolism</keyword>
<keyword id="KW-0325">Glycoprotein</keyword>
<keyword id="KW-0345">HDL</keyword>
<keyword id="KW-0443">Lipid metabolism</keyword>
<keyword id="KW-0445">Lipid transport</keyword>
<keyword id="KW-0449">Lipoprotein</keyword>
<keyword id="KW-0558">Oxidation</keyword>
<keyword id="KW-0564">Palmitate</keyword>
<keyword id="KW-0597">Phosphoprotein</keyword>
<keyword id="KW-0677">Repeat</keyword>
<keyword id="KW-0964">Secreted</keyword>
<keyword id="KW-0732">Signal</keyword>
<keyword id="KW-0753">Steroid metabolism</keyword>
<keyword id="KW-1207">Sterol metabolism</keyword>
<keyword id="KW-0813">Transport</keyword>
<accession>P0DMA8</accession>